<organism>
    <name type="scientific">Cryptophis nigrescens</name>
    <name type="common">Eastern small-eyed snake</name>
    <name type="synonym">Rhinoplocephalus nigrescens</name>
    <dbReference type="NCBI Taxonomy" id="292442"/>
    <lineage>
        <taxon>Eukaryota</taxon>
        <taxon>Metazoa</taxon>
        <taxon>Chordata</taxon>
        <taxon>Craniata</taxon>
        <taxon>Vertebrata</taxon>
        <taxon>Euteleostomi</taxon>
        <taxon>Lepidosauria</taxon>
        <taxon>Squamata</taxon>
        <taxon>Bifurcata</taxon>
        <taxon>Unidentata</taxon>
        <taxon>Episquamata</taxon>
        <taxon>Toxicofera</taxon>
        <taxon>Serpentes</taxon>
        <taxon>Colubroidea</taxon>
        <taxon>Elapidae</taxon>
        <taxon>Hydrophiinae</taxon>
        <taxon>Cryptophis</taxon>
    </lineage>
</organism>
<name>CYT_CRYNI</name>
<evidence type="ECO:0000250" key="1"/>
<evidence type="ECO:0000305" key="2"/>
<evidence type="ECO:0000305" key="3">
    <source>
    </source>
</evidence>
<dbReference type="EMBL" id="FJ411286">
    <property type="protein sequence ID" value="ACR83847.1"/>
    <property type="molecule type" value="mRNA"/>
</dbReference>
<dbReference type="SMR" id="E3P6P1"/>
<dbReference type="MEROPS" id="I25.012"/>
<dbReference type="GO" id="GO:0070062">
    <property type="term" value="C:extracellular exosome"/>
    <property type="evidence" value="ECO:0007669"/>
    <property type="project" value="TreeGrafter"/>
</dbReference>
<dbReference type="GO" id="GO:0004869">
    <property type="term" value="F:cysteine-type endopeptidase inhibitor activity"/>
    <property type="evidence" value="ECO:0007669"/>
    <property type="project" value="UniProtKB-KW"/>
</dbReference>
<dbReference type="CDD" id="cd00042">
    <property type="entry name" value="CY"/>
    <property type="match status" value="1"/>
</dbReference>
<dbReference type="FunFam" id="3.10.450.10:FF:000004">
    <property type="entry name" value="Cystatin C"/>
    <property type="match status" value="1"/>
</dbReference>
<dbReference type="Gene3D" id="3.10.450.10">
    <property type="match status" value="1"/>
</dbReference>
<dbReference type="InterPro" id="IPR000010">
    <property type="entry name" value="Cystatin_dom"/>
</dbReference>
<dbReference type="InterPro" id="IPR046350">
    <property type="entry name" value="Cystatin_sf"/>
</dbReference>
<dbReference type="InterPro" id="IPR018073">
    <property type="entry name" value="Prot_inh_cystat_CS"/>
</dbReference>
<dbReference type="PANTHER" id="PTHR47033">
    <property type="entry name" value="CYSTATIN-M"/>
    <property type="match status" value="1"/>
</dbReference>
<dbReference type="PANTHER" id="PTHR47033:SF1">
    <property type="entry name" value="CYSTATIN-M"/>
    <property type="match status" value="1"/>
</dbReference>
<dbReference type="Pfam" id="PF00031">
    <property type="entry name" value="Cystatin"/>
    <property type="match status" value="1"/>
</dbReference>
<dbReference type="SMART" id="SM00043">
    <property type="entry name" value="CY"/>
    <property type="match status" value="1"/>
</dbReference>
<dbReference type="SUPFAM" id="SSF54403">
    <property type="entry name" value="Cystatin/monellin"/>
    <property type="match status" value="1"/>
</dbReference>
<dbReference type="PROSITE" id="PS00287">
    <property type="entry name" value="CYSTATIN"/>
    <property type="match status" value="1"/>
</dbReference>
<keyword id="KW-1015">Disulfide bond</keyword>
<keyword id="KW-0646">Protease inhibitor</keyword>
<keyword id="KW-0964">Secreted</keyword>
<keyword id="KW-0732">Signal</keyword>
<keyword id="KW-0789">Thiol protease inhibitor</keyword>
<feature type="signal peptide" evidence="1">
    <location>
        <begin position="1"/>
        <end position="26"/>
    </location>
</feature>
<feature type="chain" id="PRO_5000654425" description="Cystatin">
    <location>
        <begin position="27"/>
        <end position="141"/>
    </location>
</feature>
<feature type="domain" description="Cystatin">
    <location>
        <begin position="29"/>
        <end position="129"/>
    </location>
</feature>
<feature type="short sequence motif" description="Secondary area of contact" evidence="1">
    <location>
        <begin position="73"/>
        <end position="77"/>
    </location>
</feature>
<feature type="site" description="Reactive site" evidence="1">
    <location>
        <position position="29"/>
    </location>
</feature>
<feature type="disulfide bond" evidence="1">
    <location>
        <begin position="91"/>
        <end position="107"/>
    </location>
</feature>
<feature type="disulfide bond" evidence="1">
    <location>
        <begin position="120"/>
        <end position="140"/>
    </location>
</feature>
<comment type="function">
    <text evidence="1">Inhibits various C1 cysteine proteases including cathepsin L, papain and cathepsin B. This protein has no toxic activity and its function in the venom is unknown. It may play a role as a housekeeping or regulatory protein (By similarity).</text>
</comment>
<comment type="subcellular location">
    <subcellularLocation>
        <location>Secreted</location>
    </subcellularLocation>
</comment>
<comment type="tissue specificity">
    <text evidence="3">Expressed by the venom gland at an extremely low level (at protein level).</text>
</comment>
<comment type="miscellaneous">
    <text evidence="1">Negative results: the recombinant protein does not inhibit calpain-1 (CAPN1), a C2 family cysteine protease and legumain (LGMN), a C13 family cysteine protease. Does not provoke cell death (PC3 prostate cancer cells) (By similarity).</text>
</comment>
<comment type="similarity">
    <text evidence="2">Belongs to the cystatin family.</text>
</comment>
<sequence length="141" mass="15858">MVHSQLPVAASLRLLCALLLLPSATMIPGGLSPRSVTDPDVREAAEFAVQEYNALSANAYYYKQLRIVEAQSQVVAGAKYYLTMELMKTKCAKTTGKPKVYKEIQNCELPPKAQQEKLTCRFQVWSRPWLKKTELTKMSCN</sequence>
<proteinExistence type="evidence at protein level"/>
<protein>
    <recommendedName>
        <fullName>Cystatin</fullName>
    </recommendedName>
</protein>
<accession>E3P6P1</accession>
<reference key="1">
    <citation type="journal article" date="2011" name="Biochimie">
        <title>Cloning and characterisation of novel cystatins from elapid snake venom glands.</title>
        <authorList>
            <person name="Richards R."/>
            <person name="St Pierre L."/>
            <person name="Trabi M."/>
            <person name="Johnson L.A."/>
            <person name="de Jersey J."/>
            <person name="Masci P.P."/>
            <person name="Lavin M.F."/>
        </authorList>
    </citation>
    <scope>NUCLEOTIDE SEQUENCE [MRNA]</scope>
    <scope>LEVEL OF PROTEIN EXPRESSION</scope>
    <source>
        <tissue>Venom</tissue>
        <tissue>Venom gland</tissue>
    </source>
</reference>